<feature type="chain" id="PRO_0000117605" description="NADH-ubiquinone oxidoreductase chain 2">
    <location>
        <begin position="1"/>
        <end position="489"/>
    </location>
</feature>
<feature type="transmembrane region" description="Helical" evidence="2">
    <location>
        <begin position="9"/>
        <end position="29"/>
    </location>
</feature>
<feature type="transmembrane region" description="Helical" evidence="2">
    <location>
        <begin position="47"/>
        <end position="67"/>
    </location>
</feature>
<feature type="transmembrane region" description="Helical" evidence="2">
    <location>
        <begin position="80"/>
        <end position="100"/>
    </location>
</feature>
<feature type="transmembrane region" description="Helical" evidence="2">
    <location>
        <begin position="114"/>
        <end position="134"/>
    </location>
</feature>
<feature type="transmembrane region" description="Helical" evidence="2">
    <location>
        <begin position="168"/>
        <end position="188"/>
    </location>
</feature>
<feature type="transmembrane region" description="Helical" evidence="2">
    <location>
        <begin position="216"/>
        <end position="236"/>
    </location>
</feature>
<feature type="transmembrane region" description="Helical" evidence="2">
    <location>
        <begin position="248"/>
        <end position="268"/>
    </location>
</feature>
<feature type="transmembrane region" description="Helical" evidence="2">
    <location>
        <begin position="280"/>
        <end position="300"/>
    </location>
</feature>
<feature type="transmembrane region" description="Helical" evidence="2">
    <location>
        <begin position="309"/>
        <end position="329"/>
    </location>
</feature>
<feature type="transmembrane region" description="Helical" evidence="2">
    <location>
        <begin position="335"/>
        <end position="355"/>
    </location>
</feature>
<feature type="transmembrane region" description="Helical" evidence="2">
    <location>
        <begin position="376"/>
        <end position="396"/>
    </location>
</feature>
<feature type="transmembrane region" description="Helical" evidence="2">
    <location>
        <begin position="401"/>
        <end position="421"/>
    </location>
</feature>
<feature type="transmembrane region" description="Helical" evidence="2">
    <location>
        <begin position="459"/>
        <end position="479"/>
    </location>
</feature>
<accession>P26846</accession>
<keyword id="KW-0249">Electron transport</keyword>
<keyword id="KW-0472">Membrane</keyword>
<keyword id="KW-0496">Mitochondrion</keyword>
<keyword id="KW-0999">Mitochondrion inner membrane</keyword>
<keyword id="KW-0520">NAD</keyword>
<keyword id="KW-0679">Respiratory chain</keyword>
<keyword id="KW-1278">Translocase</keyword>
<keyword id="KW-0812">Transmembrane</keyword>
<keyword id="KW-1133">Transmembrane helix</keyword>
<keyword id="KW-0813">Transport</keyword>
<keyword id="KW-0830">Ubiquinone</keyword>
<proteinExistence type="inferred from homology"/>
<evidence type="ECO:0000250" key="1"/>
<evidence type="ECO:0000255" key="2"/>
<evidence type="ECO:0000305" key="3"/>
<organism>
    <name type="scientific">Marchantia polymorpha</name>
    <name type="common">Common liverwort</name>
    <name type="synonym">Marchantia aquatica</name>
    <dbReference type="NCBI Taxonomy" id="3197"/>
    <lineage>
        <taxon>Eukaryota</taxon>
        <taxon>Viridiplantae</taxon>
        <taxon>Streptophyta</taxon>
        <taxon>Embryophyta</taxon>
        <taxon>Marchantiophyta</taxon>
        <taxon>Marchantiopsida</taxon>
        <taxon>Marchantiidae</taxon>
        <taxon>Marchantiales</taxon>
        <taxon>Marchantiaceae</taxon>
        <taxon>Marchantia</taxon>
    </lineage>
</organism>
<protein>
    <recommendedName>
        <fullName>NADH-ubiquinone oxidoreductase chain 2</fullName>
        <ecNumber>7.1.1.2</ecNumber>
    </recommendedName>
    <alternativeName>
        <fullName>NADH dehydrogenase subunit 2</fullName>
    </alternativeName>
</protein>
<geneLocation type="mitochondrion"/>
<name>NU2M_MARPO</name>
<comment type="function">
    <text evidence="1">Core subunit of the mitochondrial membrane respiratory chain NADH dehydrogenase (Complex I) that is believed to belong to the minimal assembly required for catalysis. Complex I functions in the transfer of electrons from NADH to the respiratory chain. The immediate electron acceptor for the enzyme is believed to be ubiquinone (By similarity).</text>
</comment>
<comment type="catalytic activity">
    <reaction>
        <text>a ubiquinone + NADH + 5 H(+)(in) = a ubiquinol + NAD(+) + 4 H(+)(out)</text>
        <dbReference type="Rhea" id="RHEA:29091"/>
        <dbReference type="Rhea" id="RHEA-COMP:9565"/>
        <dbReference type="Rhea" id="RHEA-COMP:9566"/>
        <dbReference type="ChEBI" id="CHEBI:15378"/>
        <dbReference type="ChEBI" id="CHEBI:16389"/>
        <dbReference type="ChEBI" id="CHEBI:17976"/>
        <dbReference type="ChEBI" id="CHEBI:57540"/>
        <dbReference type="ChEBI" id="CHEBI:57945"/>
        <dbReference type="EC" id="7.1.1.2"/>
    </reaction>
</comment>
<comment type="subcellular location">
    <subcellularLocation>
        <location>Mitochondrion inner membrane</location>
        <topology>Multi-pass membrane protein</topology>
    </subcellularLocation>
</comment>
<comment type="similarity">
    <text evidence="3">Belongs to the complex I subunit 2 family.</text>
</comment>
<sequence>MFEHDFLALFPEIFLINATIILLIYGVVFSTSKKYDYPPLVRNVGWLGLLSVLITILLVAVGSPLAVANLVYNNLIIDNFTYFCQIFLLLSTASTMVMCLDYFKQESLNAFESIVLILLSTCSMLFMISAYDLIAMYLAIELQSLCFYVIAASKRDSEFSTEAGLKYFILGAFSSGILLFGCSMIYGFTGVTNFEELAKIFTGYEITLFGAQSSGIFMGILFIAVGFLFKITAVPFHMWAPDVYEGSPTIVTAFFSIAPKISILANMLRVFIYSFYDPTWQQLFFFCSIASMILGALAAMAQNKVKRLLAYSSIGHVGYLLIGFSCGTIEGIQSLLIGIFIYVLMTVNVFAIVLALRQNRFKYIADLGALAKTNPILAITLSITMFSYAGIPPLAGFCSKFYLFFAALGCGAYLLALIGVVTSVISCFYYIRFVKIMYFDTPKTWVLYKPMDREKSLLLAITVFFITFFFLYPSPLFLVTHQMALCLCL</sequence>
<dbReference type="EC" id="7.1.1.2"/>
<dbReference type="EMBL" id="M68929">
    <property type="protein sequence ID" value="AAC09399.1"/>
    <property type="molecule type" value="Genomic_DNA"/>
</dbReference>
<dbReference type="PIR" id="S25943">
    <property type="entry name" value="S25943"/>
</dbReference>
<dbReference type="RefSeq" id="NP_054402.1">
    <property type="nucleotide sequence ID" value="NC_001660.1"/>
</dbReference>
<dbReference type="SMR" id="P26846"/>
<dbReference type="GeneID" id="2702662"/>
<dbReference type="GO" id="GO:0005743">
    <property type="term" value="C:mitochondrial inner membrane"/>
    <property type="evidence" value="ECO:0007669"/>
    <property type="project" value="UniProtKB-SubCell"/>
</dbReference>
<dbReference type="GO" id="GO:0008137">
    <property type="term" value="F:NADH dehydrogenase (ubiquinone) activity"/>
    <property type="evidence" value="ECO:0007669"/>
    <property type="project" value="UniProtKB-EC"/>
</dbReference>
<dbReference type="GO" id="GO:0042773">
    <property type="term" value="P:ATP synthesis coupled electron transport"/>
    <property type="evidence" value="ECO:0007669"/>
    <property type="project" value="InterPro"/>
</dbReference>
<dbReference type="HAMAP" id="MF_00445">
    <property type="entry name" value="NDH1_NuoN_1"/>
    <property type="match status" value="1"/>
</dbReference>
<dbReference type="InterPro" id="IPR010096">
    <property type="entry name" value="NADH-Q_OxRdtase_suN/2"/>
</dbReference>
<dbReference type="InterPro" id="IPR001750">
    <property type="entry name" value="ND/Mrp_TM"/>
</dbReference>
<dbReference type="NCBIfam" id="TIGR01770">
    <property type="entry name" value="NDH_I_N"/>
    <property type="match status" value="1"/>
</dbReference>
<dbReference type="PANTHER" id="PTHR22773">
    <property type="entry name" value="NADH DEHYDROGENASE"/>
    <property type="match status" value="1"/>
</dbReference>
<dbReference type="Pfam" id="PF00361">
    <property type="entry name" value="Proton_antipo_M"/>
    <property type="match status" value="1"/>
</dbReference>
<gene>
    <name type="primary">ND2</name>
    <name type="synonym">NAD2</name>
</gene>
<reference key="1">
    <citation type="journal article" date="1992" name="J. Mol. Biol.">
        <title>Gene organization deduced from the complete sequence of liverwort Marchantia polymorpha mitochondrial DNA. A primitive form of plant mitochondrial genome.</title>
        <authorList>
            <person name="Oda K."/>
            <person name="Yamato K."/>
            <person name="Ohta E."/>
            <person name="Nakamura Y."/>
            <person name="Takemura M."/>
            <person name="Nozato N."/>
            <person name="Akashi K."/>
            <person name="Kanegae T."/>
            <person name="Ogura Y."/>
            <person name="Kohchi T."/>
            <person name="Ohyama K."/>
        </authorList>
    </citation>
    <scope>NUCLEOTIDE SEQUENCE [GENOMIC DNA]</scope>
</reference>
<reference key="2">
    <citation type="journal article" date="1993" name="Mol. Gen. Genet.">
        <title>Cotranscriptional expression of mitochondrial genes for subunits of NADH dehydrogenase, nad5, nad4, nad2, in Marchantia polymorpha.</title>
        <authorList>
            <person name="Nozato N."/>
            <person name="Oda K."/>
            <person name="Yamato K."/>
            <person name="Ohta E."/>
            <person name="Takemura M."/>
            <person name="Akashi K."/>
            <person name="Fukuzawa H."/>
            <person name="Ohyama K."/>
        </authorList>
    </citation>
    <scope>NUCLEOTIDE SEQUENCE [GENOMIC DNA]</scope>
</reference>